<comment type="function">
    <text evidence="1">Forms oxaloacetate, a four-carbon dicarboxylic acid source for the tricarboxylic acid cycle.</text>
</comment>
<comment type="catalytic activity">
    <reaction evidence="1">
        <text>oxaloacetate + phosphate = phosphoenolpyruvate + hydrogencarbonate</text>
        <dbReference type="Rhea" id="RHEA:28370"/>
        <dbReference type="ChEBI" id="CHEBI:16452"/>
        <dbReference type="ChEBI" id="CHEBI:17544"/>
        <dbReference type="ChEBI" id="CHEBI:43474"/>
        <dbReference type="ChEBI" id="CHEBI:58702"/>
        <dbReference type="EC" id="4.1.1.31"/>
    </reaction>
</comment>
<comment type="cofactor">
    <cofactor evidence="1">
        <name>Mg(2+)</name>
        <dbReference type="ChEBI" id="CHEBI:18420"/>
    </cofactor>
</comment>
<comment type="similarity">
    <text evidence="1">Belongs to the PEPCase type 1 family.</text>
</comment>
<feature type="chain" id="PRO_1000129846" description="Phosphoenolpyruvate carboxylase">
    <location>
        <begin position="1"/>
        <end position="876"/>
    </location>
</feature>
<feature type="active site" evidence="1">
    <location>
        <position position="138"/>
    </location>
</feature>
<feature type="active site" evidence="1">
    <location>
        <position position="543"/>
    </location>
</feature>
<keyword id="KW-0120">Carbon dioxide fixation</keyword>
<keyword id="KW-0456">Lyase</keyword>
<keyword id="KW-0460">Magnesium</keyword>
<name>CAPP_ALIFM</name>
<reference key="1">
    <citation type="submission" date="2008-08" db="EMBL/GenBank/DDBJ databases">
        <title>Complete sequence of Vibrio fischeri strain MJ11.</title>
        <authorList>
            <person name="Mandel M.J."/>
            <person name="Stabb E.V."/>
            <person name="Ruby E.G."/>
            <person name="Ferriera S."/>
            <person name="Johnson J."/>
            <person name="Kravitz S."/>
            <person name="Beeson K."/>
            <person name="Sutton G."/>
            <person name="Rogers Y.-H."/>
            <person name="Friedman R."/>
            <person name="Frazier M."/>
            <person name="Venter J.C."/>
        </authorList>
    </citation>
    <scope>NUCLEOTIDE SEQUENCE [LARGE SCALE GENOMIC DNA]</scope>
    <source>
        <strain>MJ11</strain>
    </source>
</reference>
<sequence>MNEKYAALKSNVSMLGHLLGNTIRDAHGEELLAKVETIRKLSKTARAGSDEDRNALIEEIKSLPDDQLTPVARAFSQFLNLTNMAEQYHTISRHCEAHVCEPDAISTLFSKLSQSNVSKLDTAQAVRELNIELVLTAHPTEIARRTMINKLVKINECLSKLELGDISFSERDKTERRLEQLIAQAWHSDVIRQERPTPLDEAKWGFAVVENSLWQGIPEFLREFDQRLEGHLGEGLPIDARPVHMSSWMGGDRDGNPFVTHKITREVMLLSRWKAADLYLKDINELISELSMVKCTDEVRELAGDQHEPYRAILKQLRTLLGDTLESLDAQMKGELVPNKAILTDADQLWNPLYACYQSLHACGMGIIADGSLLDTLRRVKAFGAHLVRLDIRQESTRHSDVLSELTRYLGIGDYDQWSEQDKISFLVNELSSKRPLLPRKWEPSPEVQEVIDTCRVVAEQSKEALGSYVISMARTASDVLAVHLLLQEAGCPFRMDVCPLFETLDDLNRSKEVMEQLFSIDWYRGFIQNHQMVMIGYSDSAKDAGVMSAGWAQYSAMEALVEVCEKESIELTLFHGRGGTIGRGGAPAHAALLSQPPKSLKGGLRVTEQGEMIRFKLGLPEVAVNSFNLYASAILEANLLPPPEPKQEWRDLMEVLSEVSCEAYRNVVRGEKDFVPYFRAATPELELGKLPLGSRPAKRNPNGGVESLRAIPWIFSWSQNRLVLPAWLGAGEAIQYSIDKGHQELLEEMCREWPFFSTRLGMLEMVYTKCNPQMSEYYDQRLTDKSLWPLGERLRNQLQTDIKAVLNVENNDHLMERDPWGSESIRLRNIYVDPLNMLQAELLFRTRQQEETSPELEEALMVTIAGIAAGMRNTG</sequence>
<organism>
    <name type="scientific">Aliivibrio fischeri (strain MJ11)</name>
    <name type="common">Vibrio fischeri</name>
    <dbReference type="NCBI Taxonomy" id="388396"/>
    <lineage>
        <taxon>Bacteria</taxon>
        <taxon>Pseudomonadati</taxon>
        <taxon>Pseudomonadota</taxon>
        <taxon>Gammaproteobacteria</taxon>
        <taxon>Vibrionales</taxon>
        <taxon>Vibrionaceae</taxon>
        <taxon>Aliivibrio</taxon>
    </lineage>
</organism>
<dbReference type="EC" id="4.1.1.31" evidence="1"/>
<dbReference type="EMBL" id="CP001139">
    <property type="protein sequence ID" value="ACH67224.1"/>
    <property type="molecule type" value="Genomic_DNA"/>
</dbReference>
<dbReference type="RefSeq" id="WP_005421129.1">
    <property type="nucleotide sequence ID" value="NC_011184.1"/>
</dbReference>
<dbReference type="SMR" id="B5FBP8"/>
<dbReference type="KEGG" id="vfm:VFMJ11_2420"/>
<dbReference type="HOGENOM" id="CLU_006557_2_0_6"/>
<dbReference type="Proteomes" id="UP000001857">
    <property type="component" value="Chromosome I"/>
</dbReference>
<dbReference type="GO" id="GO:0005829">
    <property type="term" value="C:cytosol"/>
    <property type="evidence" value="ECO:0007669"/>
    <property type="project" value="TreeGrafter"/>
</dbReference>
<dbReference type="GO" id="GO:0000287">
    <property type="term" value="F:magnesium ion binding"/>
    <property type="evidence" value="ECO:0007669"/>
    <property type="project" value="UniProtKB-UniRule"/>
</dbReference>
<dbReference type="GO" id="GO:0008964">
    <property type="term" value="F:phosphoenolpyruvate carboxylase activity"/>
    <property type="evidence" value="ECO:0007669"/>
    <property type="project" value="UniProtKB-UniRule"/>
</dbReference>
<dbReference type="GO" id="GO:0015977">
    <property type="term" value="P:carbon fixation"/>
    <property type="evidence" value="ECO:0007669"/>
    <property type="project" value="UniProtKB-UniRule"/>
</dbReference>
<dbReference type="GO" id="GO:0006107">
    <property type="term" value="P:oxaloacetate metabolic process"/>
    <property type="evidence" value="ECO:0007669"/>
    <property type="project" value="UniProtKB-UniRule"/>
</dbReference>
<dbReference type="GO" id="GO:0006099">
    <property type="term" value="P:tricarboxylic acid cycle"/>
    <property type="evidence" value="ECO:0007669"/>
    <property type="project" value="InterPro"/>
</dbReference>
<dbReference type="FunFam" id="1.20.1440.90:FF:000002">
    <property type="entry name" value="Phosphoenolpyruvate carboxylase"/>
    <property type="match status" value="1"/>
</dbReference>
<dbReference type="Gene3D" id="1.20.1440.90">
    <property type="entry name" value="Phosphoenolpyruvate/pyruvate domain"/>
    <property type="match status" value="1"/>
</dbReference>
<dbReference type="HAMAP" id="MF_00595">
    <property type="entry name" value="PEPcase_type1"/>
    <property type="match status" value="1"/>
</dbReference>
<dbReference type="InterPro" id="IPR021135">
    <property type="entry name" value="PEP_COase"/>
</dbReference>
<dbReference type="InterPro" id="IPR022805">
    <property type="entry name" value="PEP_COase_bac/pln-type"/>
</dbReference>
<dbReference type="InterPro" id="IPR018129">
    <property type="entry name" value="PEP_COase_Lys_AS"/>
</dbReference>
<dbReference type="InterPro" id="IPR033129">
    <property type="entry name" value="PEPCASE_His_AS"/>
</dbReference>
<dbReference type="InterPro" id="IPR015813">
    <property type="entry name" value="Pyrv/PenolPyrv_kinase-like_dom"/>
</dbReference>
<dbReference type="NCBIfam" id="NF000584">
    <property type="entry name" value="PRK00009.1"/>
    <property type="match status" value="1"/>
</dbReference>
<dbReference type="PANTHER" id="PTHR30523">
    <property type="entry name" value="PHOSPHOENOLPYRUVATE CARBOXYLASE"/>
    <property type="match status" value="1"/>
</dbReference>
<dbReference type="PANTHER" id="PTHR30523:SF6">
    <property type="entry name" value="PHOSPHOENOLPYRUVATE CARBOXYLASE"/>
    <property type="match status" value="1"/>
</dbReference>
<dbReference type="Pfam" id="PF00311">
    <property type="entry name" value="PEPcase"/>
    <property type="match status" value="1"/>
</dbReference>
<dbReference type="PRINTS" id="PR00150">
    <property type="entry name" value="PEPCARBXLASE"/>
</dbReference>
<dbReference type="SUPFAM" id="SSF51621">
    <property type="entry name" value="Phosphoenolpyruvate/pyruvate domain"/>
    <property type="match status" value="1"/>
</dbReference>
<dbReference type="PROSITE" id="PS00781">
    <property type="entry name" value="PEPCASE_1"/>
    <property type="match status" value="1"/>
</dbReference>
<dbReference type="PROSITE" id="PS00393">
    <property type="entry name" value="PEPCASE_2"/>
    <property type="match status" value="1"/>
</dbReference>
<gene>
    <name evidence="1" type="primary">ppc</name>
    <name type="ordered locus">VFMJ11_2420</name>
</gene>
<protein>
    <recommendedName>
        <fullName evidence="1">Phosphoenolpyruvate carboxylase</fullName>
        <shortName evidence="1">PEPC</shortName>
        <shortName evidence="1">PEPCase</shortName>
        <ecNumber evidence="1">4.1.1.31</ecNumber>
    </recommendedName>
</protein>
<accession>B5FBP8</accession>
<proteinExistence type="inferred from homology"/>
<evidence type="ECO:0000255" key="1">
    <source>
        <dbReference type="HAMAP-Rule" id="MF_00595"/>
    </source>
</evidence>